<dbReference type="EC" id="3.1.21.4"/>
<dbReference type="EMBL" id="X55141">
    <property type="protein sequence ID" value="CAA38942.1"/>
    <property type="molecule type" value="Genomic_DNA"/>
</dbReference>
<dbReference type="PIR" id="JT0592">
    <property type="entry name" value="JT0592"/>
</dbReference>
<dbReference type="REBASE" id="1103">
    <property type="entry name" value="HgiDII"/>
</dbReference>
<dbReference type="GO" id="GO:0004519">
    <property type="term" value="F:endonuclease activity"/>
    <property type="evidence" value="ECO:0007669"/>
    <property type="project" value="UniProtKB-KW"/>
</dbReference>
<dbReference type="GO" id="GO:0009307">
    <property type="term" value="P:DNA restriction-modification system"/>
    <property type="evidence" value="ECO:0007669"/>
    <property type="project" value="UniProtKB-KW"/>
</dbReference>
<dbReference type="Gene3D" id="3.30.565.10">
    <property type="entry name" value="Histidine kinase-like ATPase, C-terminal domain"/>
    <property type="match status" value="1"/>
</dbReference>
<dbReference type="InterPro" id="IPR036890">
    <property type="entry name" value="HATPase_C_sf"/>
</dbReference>
<dbReference type="Pfam" id="PF13589">
    <property type="entry name" value="HATPase_c_3"/>
    <property type="match status" value="1"/>
</dbReference>
<dbReference type="SUPFAM" id="SSF55874">
    <property type="entry name" value="ATPase domain of HSP90 chaperone/DNA topoisomerase II/histidine kinase"/>
    <property type="match status" value="1"/>
</dbReference>
<proteinExistence type="predicted"/>
<protein>
    <recommendedName>
        <fullName evidence="3">Putative type II restriction enzyme HgiDII</fullName>
        <shortName>R.HgiDII</shortName>
        <ecNumber>3.1.21.4</ecNumber>
    </recommendedName>
    <alternativeName>
        <fullName>Endonuclease HgiDII</fullName>
    </alternativeName>
    <alternativeName>
        <fullName evidence="4">ORF68</fullName>
    </alternativeName>
</protein>
<accession>P25280</accession>
<sequence>MSDSGYELSFSLNTLNHLSEGLYSNILRFYLKLVANAWDADATEVSINIRQDEIVIQDNGIGMSIEDANTKFLRIGHQKREDSANTISGRHVMGRKGIGILAIFGIANIAEVYSCKDGVPHGFIIHKGDIERGISSDVTLYRPSSVPQEALSIESGTKIILREIKSSIGNAEKTLRTDLARRFTIINNNCNFSVIINNTPINDNDRDYLNKVQFLWYLGGESSKYANFFTKLKKSFEITNLGDGMSGMTVKGWIGTVYRPSDIPNEQPYHIYFAHGKMIQEDILIDITDAGLYRQYIIGEIEADFMDSDDEDDIITSNRQRIKQTDPRYLKLLEYVKIDIMRVIASTWTKLRKEYPSNPKKEEVNDSSLSKDSNSSEKENTNASSDSSTATENASSDSSTATENASSETNDGEVEDNSFFDDDIPEPSPPPKQEITTAFREMKNLVKNSNIPNQMKNIILYDIQQAAYAYKGTSFKACIVMLGAILEGVMLGTIQRTDVLEYLIALPQVPKPLSDLGPRNPKFADRTVLAQYIGTTFSFQDCKEIIELCVQGTNKLGVDILQTVRNSIHPGSVLKDMKQLARFNHQSAVGYIAKLHEIINLVILWNPPSIP</sequence>
<keyword id="KW-0255">Endonuclease</keyword>
<keyword id="KW-0378">Hydrolase</keyword>
<keyword id="KW-0540">Nuclease</keyword>
<keyword id="KW-0677">Repeat</keyword>
<keyword id="KW-0680">Restriction system</keyword>
<comment type="function">
    <text evidence="2 3">According to REBASE this is a P subtype restriction enzyme that recognizes the double-stranded sequence 5'-GTCGAC-3' and cleaves after G-1 (PubMed:12654995). No restriction activity was detected upon overexpressing this protein in E.coli (PubMed:1937045).</text>
</comment>
<comment type="catalytic activity">
    <reaction>
        <text>Endonucleolytic cleavage of DNA to give specific double-stranded fragments with terminal 5'-phosphates.</text>
        <dbReference type="EC" id="3.1.21.4"/>
    </reaction>
</comment>
<reference key="1">
    <citation type="journal article" date="1991" name="Gene">
        <title>Cloning, sequence and characterization of m5C-methyltransferase-encoding gene, hgiDIIM (GTCGAC), from Herpetosiphon giganteus strain Hpa2.</title>
        <authorList>
            <person name="Duesterhoeft A."/>
            <person name="Kroeger M."/>
        </authorList>
    </citation>
    <scope>NUCLEOTIDE SEQUENCE [GENOMIC DNA]</scope>
    <source>
        <strain>HPA2</strain>
    </source>
</reference>
<reference key="2">
    <citation type="journal article" date="2003" name="Nucleic Acids Res.">
        <title>A nomenclature for restriction enzymes, DNA methyltransferases, homing endonucleases and their genes.</title>
        <authorList>
            <person name="Roberts R.J."/>
            <person name="Belfort M."/>
            <person name="Bestor T."/>
            <person name="Bhagwat A.S."/>
            <person name="Bickle T.A."/>
            <person name="Bitinaite J."/>
            <person name="Blumenthal R.M."/>
            <person name="Degtyarev S.K."/>
            <person name="Dryden D.T."/>
            <person name="Dybvig K."/>
            <person name="Firman K."/>
            <person name="Gromova E.S."/>
            <person name="Gumport R.I."/>
            <person name="Halford S.E."/>
            <person name="Hattman S."/>
            <person name="Heitman J."/>
            <person name="Hornby D.P."/>
            <person name="Janulaitis A."/>
            <person name="Jeltsch A."/>
            <person name="Josephsen J."/>
            <person name="Kiss A."/>
            <person name="Klaenhammer T.R."/>
            <person name="Kobayashi I."/>
            <person name="Kong H."/>
            <person name="Krueger D.H."/>
            <person name="Lacks S."/>
            <person name="Marinus M.G."/>
            <person name="Miyahara M."/>
            <person name="Morgan R.D."/>
            <person name="Murray N.E."/>
            <person name="Nagaraja V."/>
            <person name="Piekarowicz A."/>
            <person name="Pingoud A."/>
            <person name="Raleigh E."/>
            <person name="Rao D.N."/>
            <person name="Reich N."/>
            <person name="Repin V.E."/>
            <person name="Selker E.U."/>
            <person name="Shaw P.C."/>
            <person name="Stein D.C."/>
            <person name="Stoddard B.L."/>
            <person name="Szybalski W."/>
            <person name="Trautner T.A."/>
            <person name="Van Etten J.L."/>
            <person name="Vitor J.M."/>
            <person name="Wilson G.G."/>
            <person name="Xu S.Y."/>
        </authorList>
    </citation>
    <scope>NOMENCLATURE</scope>
    <scope>SUBTYPE</scope>
</reference>
<feature type="chain" id="PRO_0000066188" description="Putative type II restriction enzyme HgiDII">
    <location>
        <begin position="1"/>
        <end position="611"/>
    </location>
</feature>
<feature type="repeat" description="1">
    <location>
        <begin position="382"/>
        <end position="392"/>
    </location>
</feature>
<feature type="repeat" description="2">
    <location>
        <begin position="393"/>
        <end position="403"/>
    </location>
</feature>
<feature type="repeat" description="3; truncated">
    <location>
        <begin position="404"/>
        <end position="409"/>
    </location>
</feature>
<feature type="region of interest" description="Disordered" evidence="1">
    <location>
        <begin position="355"/>
        <end position="434"/>
    </location>
</feature>
<feature type="region of interest" description="2.5 X 11 AA tandem repeats">
    <location>
        <begin position="382"/>
        <end position="403"/>
    </location>
</feature>
<feature type="compositionally biased region" description="Basic and acidic residues" evidence="1">
    <location>
        <begin position="355"/>
        <end position="364"/>
    </location>
</feature>
<feature type="compositionally biased region" description="Low complexity" evidence="1">
    <location>
        <begin position="381"/>
        <end position="409"/>
    </location>
</feature>
<feature type="compositionally biased region" description="Acidic residues" evidence="1">
    <location>
        <begin position="410"/>
        <end position="425"/>
    </location>
</feature>
<organism>
    <name type="scientific">Herpetosiphon aurantiacus</name>
    <name type="common">Herpetosiphon giganteus</name>
    <dbReference type="NCBI Taxonomy" id="65"/>
    <lineage>
        <taxon>Bacteria</taxon>
        <taxon>Bacillati</taxon>
        <taxon>Chloroflexota</taxon>
        <taxon>Chloroflexia</taxon>
        <taxon>Herpetosiphonales</taxon>
        <taxon>Herpetosiphonaceae</taxon>
        <taxon>Herpetosiphon</taxon>
    </lineage>
</organism>
<evidence type="ECO:0000256" key="1">
    <source>
        <dbReference type="SAM" id="MobiDB-lite"/>
    </source>
</evidence>
<evidence type="ECO:0000269" key="2">
    <source>
    </source>
</evidence>
<evidence type="ECO:0000303" key="3">
    <source>
    </source>
</evidence>
<evidence type="ECO:0000303" key="4">
    <source>
    </source>
</evidence>
<name>T2D2_HERAU</name>